<evidence type="ECO:0000250" key="1">
    <source>
        <dbReference type="UniProtKB" id="A0A1C7D1B7"/>
    </source>
</evidence>
<evidence type="ECO:0000250" key="2">
    <source>
        <dbReference type="UniProtKB" id="D5VRB9"/>
    </source>
</evidence>
<evidence type="ECO:0000250" key="3">
    <source>
        <dbReference type="UniProtKB" id="Q02908"/>
    </source>
</evidence>
<evidence type="ECO:0000255" key="4">
    <source>
        <dbReference type="PROSITE-ProRule" id="PRU00532"/>
    </source>
</evidence>
<evidence type="ECO:0000255" key="5">
    <source>
        <dbReference type="PROSITE-ProRule" id="PRU01266"/>
    </source>
</evidence>
<evidence type="ECO:0000305" key="6"/>
<protein>
    <recommendedName>
        <fullName evidence="6">tRNA uridine(34) acetyltransferase</fullName>
        <ecNumber evidence="2">2.3.1.311</ecNumber>
    </recommendedName>
    <alternativeName>
        <fullName evidence="6">Elongator complex protein 3 homolog</fullName>
    </alternativeName>
</protein>
<feature type="chain" id="PRO_0000107183" description="tRNA uridine(34) acetyltransferase">
    <location>
        <begin position="1"/>
        <end position="541"/>
    </location>
</feature>
<feature type="domain" description="Radical SAM core" evidence="5">
    <location>
        <begin position="79"/>
        <end position="350"/>
    </location>
</feature>
<feature type="domain" description="N-acetyltransferase" evidence="4">
    <location>
        <begin position="401"/>
        <end position="541"/>
    </location>
</feature>
<feature type="region of interest" description="Radical S-adenosyl-L-methionine (rSAM)" evidence="2">
    <location>
        <begin position="76"/>
        <end position="336"/>
    </location>
</feature>
<feature type="binding site" evidence="3">
    <location>
        <position position="96"/>
    </location>
    <ligand>
        <name>[4Fe-4S] cluster</name>
        <dbReference type="ChEBI" id="CHEBI:49883"/>
        <note>4Fe-4S-S-AdoMet</note>
    </ligand>
</feature>
<feature type="binding site" evidence="1">
    <location>
        <position position="101"/>
    </location>
    <ligand>
        <name>[4Fe-4S] cluster</name>
        <dbReference type="ChEBI" id="CHEBI:49883"/>
        <note>4Fe-4S-S-AdoMet</note>
    </ligand>
</feature>
<feature type="binding site" evidence="1">
    <location>
        <position position="104"/>
    </location>
    <ligand>
        <name>[4Fe-4S] cluster</name>
        <dbReference type="ChEBI" id="CHEBI:49883"/>
        <note>4Fe-4S-S-AdoMet</note>
    </ligand>
</feature>
<feature type="binding site" evidence="1">
    <location>
        <position position="156"/>
    </location>
    <ligand>
        <name>acetyl-CoA</name>
        <dbReference type="ChEBI" id="CHEBI:57288"/>
    </ligand>
</feature>
<feature type="binding site" evidence="1">
    <location>
        <begin position="467"/>
        <end position="470"/>
    </location>
    <ligand>
        <name>acetyl-CoA</name>
        <dbReference type="ChEBI" id="CHEBI:57288"/>
    </ligand>
</feature>
<feature type="binding site" evidence="1">
    <location>
        <begin position="491"/>
        <end position="493"/>
    </location>
    <ligand>
        <name>acetyl-CoA</name>
        <dbReference type="ChEBI" id="CHEBI:57288"/>
    </ligand>
</feature>
<feature type="binding site" evidence="1">
    <location>
        <position position="524"/>
    </location>
    <ligand>
        <name>acetyl-CoA</name>
        <dbReference type="ChEBI" id="CHEBI:57288"/>
    </ligand>
</feature>
<dbReference type="EC" id="2.3.1.311" evidence="2"/>
<dbReference type="EMBL" id="L77117">
    <property type="protein sequence ID" value="AAB99138.1"/>
    <property type="molecule type" value="Genomic_DNA"/>
</dbReference>
<dbReference type="PIR" id="G64441">
    <property type="entry name" value="G64441"/>
</dbReference>
<dbReference type="SMR" id="Q58536"/>
<dbReference type="FunCoup" id="Q58536">
    <property type="interactions" value="162"/>
</dbReference>
<dbReference type="STRING" id="243232.MJ_1136"/>
<dbReference type="PaxDb" id="243232-MJ_1136"/>
<dbReference type="DNASU" id="1452032"/>
<dbReference type="EnsemblBacteria" id="AAB99138">
    <property type="protein sequence ID" value="AAB99138"/>
    <property type="gene ID" value="MJ_1136"/>
</dbReference>
<dbReference type="KEGG" id="mja:MJ_1136"/>
<dbReference type="eggNOG" id="arCOG01361">
    <property type="taxonomic scope" value="Archaea"/>
</dbReference>
<dbReference type="HOGENOM" id="CLU_025983_2_1_2"/>
<dbReference type="InParanoid" id="Q58536"/>
<dbReference type="PhylomeDB" id="Q58536"/>
<dbReference type="Proteomes" id="UP000000805">
    <property type="component" value="Chromosome"/>
</dbReference>
<dbReference type="GO" id="GO:0005737">
    <property type="term" value="C:cytoplasm"/>
    <property type="evidence" value="ECO:0000318"/>
    <property type="project" value="GO_Central"/>
</dbReference>
<dbReference type="GO" id="GO:0051539">
    <property type="term" value="F:4 iron, 4 sulfur cluster binding"/>
    <property type="evidence" value="ECO:0007669"/>
    <property type="project" value="UniProtKB-KW"/>
</dbReference>
<dbReference type="GO" id="GO:0046872">
    <property type="term" value="F:metal ion binding"/>
    <property type="evidence" value="ECO:0007669"/>
    <property type="project" value="UniProtKB-KW"/>
</dbReference>
<dbReference type="GO" id="GO:0000049">
    <property type="term" value="F:tRNA binding"/>
    <property type="evidence" value="ECO:0007669"/>
    <property type="project" value="UniProtKB-KW"/>
</dbReference>
<dbReference type="GO" id="GO:0106261">
    <property type="term" value="F:tRNA uridine(34) acetyltransferase activity"/>
    <property type="evidence" value="ECO:0007669"/>
    <property type="project" value="RHEA"/>
</dbReference>
<dbReference type="GO" id="GO:0002926">
    <property type="term" value="P:tRNA wobble base 5-methoxycarbonylmethyl-2-thiouridinylation"/>
    <property type="evidence" value="ECO:0000318"/>
    <property type="project" value="GO_Central"/>
</dbReference>
<dbReference type="CDD" id="cd01335">
    <property type="entry name" value="Radical_SAM"/>
    <property type="match status" value="1"/>
</dbReference>
<dbReference type="FunFam" id="3.20.20.70:FF:000388">
    <property type="entry name" value="Histone acetyltransferase Elp3 homolog"/>
    <property type="match status" value="1"/>
</dbReference>
<dbReference type="Gene3D" id="3.40.630.30">
    <property type="match status" value="1"/>
</dbReference>
<dbReference type="Gene3D" id="3.20.20.70">
    <property type="entry name" value="Aldolase class I"/>
    <property type="match status" value="1"/>
</dbReference>
<dbReference type="InterPro" id="IPR016181">
    <property type="entry name" value="Acyl_CoA_acyltransferase"/>
</dbReference>
<dbReference type="InterPro" id="IPR013785">
    <property type="entry name" value="Aldolase_TIM"/>
</dbReference>
<dbReference type="InterPro" id="IPR039661">
    <property type="entry name" value="ELP3"/>
</dbReference>
<dbReference type="InterPro" id="IPR034687">
    <property type="entry name" value="ELP3-like"/>
</dbReference>
<dbReference type="InterPro" id="IPR056591">
    <property type="entry name" value="ELP3-like_N"/>
</dbReference>
<dbReference type="InterPro" id="IPR006638">
    <property type="entry name" value="Elp3/MiaA/NifB-like_rSAM"/>
</dbReference>
<dbReference type="InterPro" id="IPR000182">
    <property type="entry name" value="GNAT_dom"/>
</dbReference>
<dbReference type="InterPro" id="IPR032432">
    <property type="entry name" value="Radical_SAM_C"/>
</dbReference>
<dbReference type="InterPro" id="IPR007197">
    <property type="entry name" value="rSAM"/>
</dbReference>
<dbReference type="NCBIfam" id="TIGR01211">
    <property type="entry name" value="ELP3"/>
    <property type="match status" value="1"/>
</dbReference>
<dbReference type="PANTHER" id="PTHR11135">
    <property type="entry name" value="HISTONE ACETYLTRANSFERASE-RELATED"/>
    <property type="match status" value="1"/>
</dbReference>
<dbReference type="PANTHER" id="PTHR11135:SF7">
    <property type="entry name" value="TRNA URIDINE(34) ACETYLTRANSFERASE"/>
    <property type="match status" value="1"/>
</dbReference>
<dbReference type="Pfam" id="PF13673">
    <property type="entry name" value="Acetyltransf_10"/>
    <property type="match status" value="1"/>
</dbReference>
<dbReference type="Pfam" id="PF23613">
    <property type="entry name" value="ELP3_N"/>
    <property type="match status" value="1"/>
</dbReference>
<dbReference type="Pfam" id="PF04055">
    <property type="entry name" value="Radical_SAM"/>
    <property type="match status" value="1"/>
</dbReference>
<dbReference type="Pfam" id="PF16199">
    <property type="entry name" value="Radical_SAM_C"/>
    <property type="match status" value="1"/>
</dbReference>
<dbReference type="PIRSF" id="PIRSF005669">
    <property type="entry name" value="Hist_AcTrfase_ELP3"/>
    <property type="match status" value="1"/>
</dbReference>
<dbReference type="SFLD" id="SFLDG01086">
    <property type="entry name" value="elongater_protein-like"/>
    <property type="match status" value="1"/>
</dbReference>
<dbReference type="SFLD" id="SFLDF00344">
    <property type="entry name" value="ELP3-like"/>
    <property type="match status" value="1"/>
</dbReference>
<dbReference type="SMART" id="SM00729">
    <property type="entry name" value="Elp3"/>
    <property type="match status" value="1"/>
</dbReference>
<dbReference type="SUPFAM" id="SSF55729">
    <property type="entry name" value="Acyl-CoA N-acyltransferases (Nat)"/>
    <property type="match status" value="1"/>
</dbReference>
<dbReference type="SUPFAM" id="SSF102114">
    <property type="entry name" value="Radical SAM enzymes"/>
    <property type="match status" value="1"/>
</dbReference>
<dbReference type="PROSITE" id="PS51186">
    <property type="entry name" value="GNAT"/>
    <property type="match status" value="1"/>
</dbReference>
<dbReference type="PROSITE" id="PS51918">
    <property type="entry name" value="RADICAL_SAM"/>
    <property type="match status" value="1"/>
</dbReference>
<gene>
    <name type="ordered locus">MJ1136</name>
</gene>
<comment type="function">
    <text evidence="2">tRNA uridine(34) acetyltransferase, which mediates formation of carboxymethyluridine in the wobble base at position 34 in tRNAs. The proposed mechanism is the following: (i) recruits S-adenosyl-L-methionine and cleaves it to generate a 5'-deoxyadenosine radical (5'-dA) in the radical S-adenosyl-L-methionine (rSAM) region, (ii) hydrolyzes acetyl-CoA in the N-acetyltransferase domain and (iii) an acetyl radical is formed by the products of the two domains and (iv) is transferred onto the C5 position of uridine(34) in the bound tRNA molecule. Does not show protein lysine acetyltransferase activity.</text>
</comment>
<comment type="catalytic activity">
    <reaction evidence="2">
        <text>uridine(34) in tRNA + acetyl-CoA + S-adenosyl-L-methionine + H2O = 5-(carboxymethyl)uridine(34) in tRNA + 5'-deoxyadenosine + L-methionine + CoA + 2 H(+)</text>
        <dbReference type="Rhea" id="RHEA:61020"/>
        <dbReference type="Rhea" id="RHEA-COMP:10407"/>
        <dbReference type="Rhea" id="RHEA-COMP:11727"/>
        <dbReference type="ChEBI" id="CHEBI:15377"/>
        <dbReference type="ChEBI" id="CHEBI:15378"/>
        <dbReference type="ChEBI" id="CHEBI:17319"/>
        <dbReference type="ChEBI" id="CHEBI:57287"/>
        <dbReference type="ChEBI" id="CHEBI:57288"/>
        <dbReference type="ChEBI" id="CHEBI:57844"/>
        <dbReference type="ChEBI" id="CHEBI:59789"/>
        <dbReference type="ChEBI" id="CHEBI:65315"/>
        <dbReference type="ChEBI" id="CHEBI:74882"/>
        <dbReference type="EC" id="2.3.1.311"/>
    </reaction>
    <physiologicalReaction direction="left-to-right" evidence="2">
        <dbReference type="Rhea" id="RHEA:61021"/>
    </physiologicalReaction>
</comment>
<comment type="cofactor">
    <cofactor evidence="2">
        <name>[4Fe-4S] cluster</name>
        <dbReference type="ChEBI" id="CHEBI:49883"/>
    </cofactor>
    <text evidence="3">Binds 1 [4Fe-4S] cluster. The cluster is coordinated with 3 cysteines and an exchangeable S-adenosyl-L-methionine.</text>
</comment>
<comment type="pathway">
    <text evidence="2">tRNA modification.</text>
</comment>
<comment type="similarity">
    <text evidence="6">Belongs to the ELP3 family.</text>
</comment>
<keyword id="KW-0004">4Fe-4S</keyword>
<keyword id="KW-0012">Acyltransferase</keyword>
<keyword id="KW-0408">Iron</keyword>
<keyword id="KW-0411">Iron-sulfur</keyword>
<keyword id="KW-0479">Metal-binding</keyword>
<keyword id="KW-1185">Reference proteome</keyword>
<keyword id="KW-0694">RNA-binding</keyword>
<keyword id="KW-0949">S-adenosyl-L-methionine</keyword>
<keyword id="KW-0808">Transferase</keyword>
<keyword id="KW-0819">tRNA processing</keyword>
<keyword id="KW-0820">tRNA-binding</keyword>
<proteinExistence type="inferred from homology"/>
<reference key="1">
    <citation type="journal article" date="1996" name="Science">
        <title>Complete genome sequence of the methanogenic archaeon, Methanococcus jannaschii.</title>
        <authorList>
            <person name="Bult C.J."/>
            <person name="White O."/>
            <person name="Olsen G.J."/>
            <person name="Zhou L."/>
            <person name="Fleischmann R.D."/>
            <person name="Sutton G.G."/>
            <person name="Blake J.A."/>
            <person name="FitzGerald L.M."/>
            <person name="Clayton R.A."/>
            <person name="Gocayne J.D."/>
            <person name="Kerlavage A.R."/>
            <person name="Dougherty B.A."/>
            <person name="Tomb J.-F."/>
            <person name="Adams M.D."/>
            <person name="Reich C.I."/>
            <person name="Overbeek R."/>
            <person name="Kirkness E.F."/>
            <person name="Weinstock K.G."/>
            <person name="Merrick J.M."/>
            <person name="Glodek A."/>
            <person name="Scott J.L."/>
            <person name="Geoghagen N.S.M."/>
            <person name="Weidman J.F."/>
            <person name="Fuhrmann J.L."/>
            <person name="Nguyen D."/>
            <person name="Utterback T.R."/>
            <person name="Kelley J.M."/>
            <person name="Peterson J.D."/>
            <person name="Sadow P.W."/>
            <person name="Hanna M.C."/>
            <person name="Cotton M.D."/>
            <person name="Roberts K.M."/>
            <person name="Hurst M.A."/>
            <person name="Kaine B.P."/>
            <person name="Borodovsky M."/>
            <person name="Klenk H.-P."/>
            <person name="Fraser C.M."/>
            <person name="Smith H.O."/>
            <person name="Woese C.R."/>
            <person name="Venter J.C."/>
        </authorList>
    </citation>
    <scope>NUCLEOTIDE SEQUENCE [LARGE SCALE GENOMIC DNA]</scope>
    <source>
        <strain>ATCC 43067 / DSM 2661 / JAL-1 / JCM 10045 / NBRC 100440</strain>
    </source>
</reference>
<sequence>MVIIMDEKAKLMRCIIERILDEYNKGKTLDKKRIEQIKAECLRIHRIGIGHPSNSEILQYATEEEKKILIPILRKKPVRTISGVAVVAVMTSPEKCPHGKCIFCPGGVGSVFGDVPQSYTGREPATMRGLMFNFDPYLQTKARIEQLEKVGHPTNKIELIIMGGTFPARDIEYQDWFIKRCLDAMNGVDASSLEEAQKINETAEHRCVALCIETRPDYCGEKEINQMLKLGATRVELGVQTIYNEILEFCKRGHTVEDTIKATQLLKDSGLKVSYHLMPGMPGSDMEMDKKMFKEIFENPDFKPDMVKIYPCLVIEGTELYEMWKRGEYKPYREEEAIEIISYAKSIMPKWVRTSRIQRDIPATVIVDGVKKSNLGELVYKYMEKHGIKCKCIRCREVGHVMYKKGIMPDIEHIKLCREEYEASGGTEIFLSYEDVKNDILIAFLRLREPYKPFRKEIDDNTMLVRQLHVCGQEKPLTKDLKEITWQHKGYGRKLLEEAERIAKEEFGKKKILVTSGIGVREYYRKLGYERVGAYMGKYLE</sequence>
<accession>Q58536</accession>
<organism>
    <name type="scientific">Methanocaldococcus jannaschii (strain ATCC 43067 / DSM 2661 / JAL-1 / JCM 10045 / NBRC 100440)</name>
    <name type="common">Methanococcus jannaschii</name>
    <dbReference type="NCBI Taxonomy" id="243232"/>
    <lineage>
        <taxon>Archaea</taxon>
        <taxon>Methanobacteriati</taxon>
        <taxon>Methanobacteriota</taxon>
        <taxon>Methanomada group</taxon>
        <taxon>Methanococci</taxon>
        <taxon>Methanococcales</taxon>
        <taxon>Methanocaldococcaceae</taxon>
        <taxon>Methanocaldococcus</taxon>
    </lineage>
</organism>
<name>ELP3_METJA</name>